<sequence length="8" mass="855">CEHSHDGA</sequence>
<name>GLUR_HUMAN</name>
<evidence type="ECO:0000269" key="1">
    <source>
    </source>
</evidence>
<evidence type="ECO:0000305" key="2"/>
<keyword id="KW-0903">Direct protein sequencing</keyword>
<keyword id="KW-0325">Glycoprotein</keyword>
<proteinExistence type="evidence at protein level"/>
<feature type="peptide" id="PRO_0000044141" description="Urine glycopeptide">
    <location>
        <begin position="1"/>
        <end position="8"/>
    </location>
</feature>
<feature type="glycosylation site" description="S-linked (Gal...) cysteine" evidence="1">
    <location>
        <position position="1"/>
    </location>
</feature>
<comment type="caution">
    <text evidence="2">Since this peptide was first reported, its unique glycosylation modification has not been observed again, and the peptide sequence has not been found in the complete proteome.</text>
</comment>
<protein>
    <recommendedName>
        <fullName>Urine glycopeptide</fullName>
    </recommendedName>
</protein>
<accession>P02729</accession>
<organism>
    <name type="scientific">Homo sapiens</name>
    <name type="common">Human</name>
    <dbReference type="NCBI Taxonomy" id="9606"/>
    <lineage>
        <taxon>Eukaryota</taxon>
        <taxon>Metazoa</taxon>
        <taxon>Chordata</taxon>
        <taxon>Craniata</taxon>
        <taxon>Vertebrata</taxon>
        <taxon>Euteleostomi</taxon>
        <taxon>Mammalia</taxon>
        <taxon>Eutheria</taxon>
        <taxon>Euarchontoglires</taxon>
        <taxon>Primates</taxon>
        <taxon>Haplorrhini</taxon>
        <taxon>Catarrhini</taxon>
        <taxon>Hominidae</taxon>
        <taxon>Homo</taxon>
    </lineage>
</organism>
<reference key="1">
    <citation type="journal article" date="1971" name="Biochem. J.">
        <title>Identification in urine of a low-molecular-weight highly polar glycopeptide containing cysteinyl-galactose.</title>
        <authorList>
            <person name="Lote C.J."/>
            <person name="Weiss J.B."/>
        </authorList>
    </citation>
    <scope>PROTEIN SEQUENCE</scope>
</reference>
<dbReference type="PIR" id="A03188">
    <property type="entry name" value="XGHUEU"/>
</dbReference>
<dbReference type="iPTMnet" id="P02729"/>
<dbReference type="Pharos" id="P02729">
    <property type="development level" value="Tdark"/>
</dbReference>
<dbReference type="GO" id="GO:0005576">
    <property type="term" value="C:extracellular region"/>
    <property type="evidence" value="ECO:0000303"/>
    <property type="project" value="UniProtKB"/>
</dbReference>